<feature type="chain" id="PRO_1000091655" description="Ribonuclease HII">
    <location>
        <begin position="1"/>
        <end position="198"/>
    </location>
</feature>
<feature type="domain" description="RNase H type-2" evidence="2">
    <location>
        <begin position="10"/>
        <end position="198"/>
    </location>
</feature>
<feature type="binding site" evidence="1">
    <location>
        <position position="16"/>
    </location>
    <ligand>
        <name>a divalent metal cation</name>
        <dbReference type="ChEBI" id="CHEBI:60240"/>
    </ligand>
</feature>
<feature type="binding site" evidence="1">
    <location>
        <position position="17"/>
    </location>
    <ligand>
        <name>a divalent metal cation</name>
        <dbReference type="ChEBI" id="CHEBI:60240"/>
    </ligand>
</feature>
<feature type="binding site" evidence="1">
    <location>
        <position position="108"/>
    </location>
    <ligand>
        <name>a divalent metal cation</name>
        <dbReference type="ChEBI" id="CHEBI:60240"/>
    </ligand>
</feature>
<dbReference type="EC" id="3.1.26.4" evidence="1"/>
<dbReference type="EMBL" id="CP001127">
    <property type="protein sequence ID" value="ACF89392.1"/>
    <property type="molecule type" value="Genomic_DNA"/>
</dbReference>
<dbReference type="RefSeq" id="WP_000569411.1">
    <property type="nucleotide sequence ID" value="NC_011094.1"/>
</dbReference>
<dbReference type="SMR" id="B4TYE3"/>
<dbReference type="KEGG" id="sew:SeSA_A0256"/>
<dbReference type="HOGENOM" id="CLU_036532_3_2_6"/>
<dbReference type="Proteomes" id="UP000001865">
    <property type="component" value="Chromosome"/>
</dbReference>
<dbReference type="GO" id="GO:0005737">
    <property type="term" value="C:cytoplasm"/>
    <property type="evidence" value="ECO:0007669"/>
    <property type="project" value="UniProtKB-SubCell"/>
</dbReference>
<dbReference type="GO" id="GO:0032299">
    <property type="term" value="C:ribonuclease H2 complex"/>
    <property type="evidence" value="ECO:0007669"/>
    <property type="project" value="TreeGrafter"/>
</dbReference>
<dbReference type="GO" id="GO:0030145">
    <property type="term" value="F:manganese ion binding"/>
    <property type="evidence" value="ECO:0007669"/>
    <property type="project" value="UniProtKB-UniRule"/>
</dbReference>
<dbReference type="GO" id="GO:0003723">
    <property type="term" value="F:RNA binding"/>
    <property type="evidence" value="ECO:0007669"/>
    <property type="project" value="InterPro"/>
</dbReference>
<dbReference type="GO" id="GO:0004523">
    <property type="term" value="F:RNA-DNA hybrid ribonuclease activity"/>
    <property type="evidence" value="ECO:0007669"/>
    <property type="project" value="UniProtKB-UniRule"/>
</dbReference>
<dbReference type="GO" id="GO:0043137">
    <property type="term" value="P:DNA replication, removal of RNA primer"/>
    <property type="evidence" value="ECO:0007669"/>
    <property type="project" value="TreeGrafter"/>
</dbReference>
<dbReference type="GO" id="GO:0006298">
    <property type="term" value="P:mismatch repair"/>
    <property type="evidence" value="ECO:0007669"/>
    <property type="project" value="TreeGrafter"/>
</dbReference>
<dbReference type="CDD" id="cd07182">
    <property type="entry name" value="RNase_HII_bacteria_HII_like"/>
    <property type="match status" value="1"/>
</dbReference>
<dbReference type="FunFam" id="3.30.420.10:FF:000006">
    <property type="entry name" value="Ribonuclease HII"/>
    <property type="match status" value="1"/>
</dbReference>
<dbReference type="Gene3D" id="3.30.420.10">
    <property type="entry name" value="Ribonuclease H-like superfamily/Ribonuclease H"/>
    <property type="match status" value="1"/>
</dbReference>
<dbReference type="HAMAP" id="MF_00052_B">
    <property type="entry name" value="RNase_HII_B"/>
    <property type="match status" value="1"/>
</dbReference>
<dbReference type="InterPro" id="IPR022898">
    <property type="entry name" value="RNase_HII"/>
</dbReference>
<dbReference type="InterPro" id="IPR001352">
    <property type="entry name" value="RNase_HII/HIII"/>
</dbReference>
<dbReference type="InterPro" id="IPR024567">
    <property type="entry name" value="RNase_HII/HIII_dom"/>
</dbReference>
<dbReference type="InterPro" id="IPR012337">
    <property type="entry name" value="RNaseH-like_sf"/>
</dbReference>
<dbReference type="InterPro" id="IPR036397">
    <property type="entry name" value="RNaseH_sf"/>
</dbReference>
<dbReference type="NCBIfam" id="NF000594">
    <property type="entry name" value="PRK00015.1-1"/>
    <property type="match status" value="1"/>
</dbReference>
<dbReference type="NCBIfam" id="NF000595">
    <property type="entry name" value="PRK00015.1-3"/>
    <property type="match status" value="1"/>
</dbReference>
<dbReference type="NCBIfam" id="NF000596">
    <property type="entry name" value="PRK00015.1-4"/>
    <property type="match status" value="1"/>
</dbReference>
<dbReference type="PANTHER" id="PTHR10954">
    <property type="entry name" value="RIBONUCLEASE H2 SUBUNIT A"/>
    <property type="match status" value="1"/>
</dbReference>
<dbReference type="PANTHER" id="PTHR10954:SF18">
    <property type="entry name" value="RIBONUCLEASE HII"/>
    <property type="match status" value="1"/>
</dbReference>
<dbReference type="Pfam" id="PF01351">
    <property type="entry name" value="RNase_HII"/>
    <property type="match status" value="1"/>
</dbReference>
<dbReference type="SUPFAM" id="SSF53098">
    <property type="entry name" value="Ribonuclease H-like"/>
    <property type="match status" value="1"/>
</dbReference>
<dbReference type="PROSITE" id="PS51975">
    <property type="entry name" value="RNASE_H_2"/>
    <property type="match status" value="1"/>
</dbReference>
<reference key="1">
    <citation type="journal article" date="2011" name="J. Bacteriol.">
        <title>Comparative genomics of 28 Salmonella enterica isolates: evidence for CRISPR-mediated adaptive sublineage evolution.</title>
        <authorList>
            <person name="Fricke W.F."/>
            <person name="Mammel M.K."/>
            <person name="McDermott P.F."/>
            <person name="Tartera C."/>
            <person name="White D.G."/>
            <person name="Leclerc J.E."/>
            <person name="Ravel J."/>
            <person name="Cebula T.A."/>
        </authorList>
    </citation>
    <scope>NUCLEOTIDE SEQUENCE [LARGE SCALE GENOMIC DNA]</scope>
    <source>
        <strain>CVM19633</strain>
    </source>
</reference>
<sequence>MIEFVYPHTHLVAGVDEVGRGPLVGAVVTAAVILDPARPIVGLNDSKKLSEKRRLSLYDEIKEKALSWSLGRAEAHEIDELNILHATMLAMQRAVAGLHIAPEYVLIDGNRCPALPVPSMAVVKGDSRVAEISAASILAKVTRDAEMAALDIVFPQYGFAQHKGYPTAFHLEKLAQYGATAHHRRSFAPVKRALGLVS</sequence>
<gene>
    <name evidence="1" type="primary">rnhB</name>
    <name type="ordered locus">SeSA_A0256</name>
</gene>
<keyword id="KW-0963">Cytoplasm</keyword>
<keyword id="KW-0255">Endonuclease</keyword>
<keyword id="KW-0378">Hydrolase</keyword>
<keyword id="KW-0464">Manganese</keyword>
<keyword id="KW-0479">Metal-binding</keyword>
<keyword id="KW-0540">Nuclease</keyword>
<name>RNH2_SALSV</name>
<accession>B4TYE3</accession>
<evidence type="ECO:0000255" key="1">
    <source>
        <dbReference type="HAMAP-Rule" id="MF_00052"/>
    </source>
</evidence>
<evidence type="ECO:0000255" key="2">
    <source>
        <dbReference type="PROSITE-ProRule" id="PRU01319"/>
    </source>
</evidence>
<proteinExistence type="inferred from homology"/>
<protein>
    <recommendedName>
        <fullName evidence="1">Ribonuclease HII</fullName>
        <shortName evidence="1">RNase HII</shortName>
        <ecNumber evidence="1">3.1.26.4</ecNumber>
    </recommendedName>
</protein>
<comment type="function">
    <text evidence="1">Endonuclease that specifically degrades the RNA of RNA-DNA hybrids.</text>
</comment>
<comment type="catalytic activity">
    <reaction evidence="1">
        <text>Endonucleolytic cleavage to 5'-phosphomonoester.</text>
        <dbReference type="EC" id="3.1.26.4"/>
    </reaction>
</comment>
<comment type="cofactor">
    <cofactor evidence="1">
        <name>Mn(2+)</name>
        <dbReference type="ChEBI" id="CHEBI:29035"/>
    </cofactor>
    <cofactor evidence="1">
        <name>Mg(2+)</name>
        <dbReference type="ChEBI" id="CHEBI:18420"/>
    </cofactor>
    <text evidence="1">Manganese or magnesium. Binds 1 divalent metal ion per monomer in the absence of substrate. May bind a second metal ion after substrate binding.</text>
</comment>
<comment type="subcellular location">
    <subcellularLocation>
        <location evidence="1">Cytoplasm</location>
    </subcellularLocation>
</comment>
<comment type="similarity">
    <text evidence="1">Belongs to the RNase HII family.</text>
</comment>
<organism>
    <name type="scientific">Salmonella schwarzengrund (strain CVM19633)</name>
    <dbReference type="NCBI Taxonomy" id="439843"/>
    <lineage>
        <taxon>Bacteria</taxon>
        <taxon>Pseudomonadati</taxon>
        <taxon>Pseudomonadota</taxon>
        <taxon>Gammaproteobacteria</taxon>
        <taxon>Enterobacterales</taxon>
        <taxon>Enterobacteriaceae</taxon>
        <taxon>Salmonella</taxon>
    </lineage>
</organism>